<protein>
    <recommendedName>
        <fullName evidence="1">Argininosuccinate lyase</fullName>
        <shortName evidence="1">ASAL</shortName>
        <ecNumber evidence="1">4.3.2.1</ecNumber>
    </recommendedName>
    <alternativeName>
        <fullName evidence="1">Arginosuccinase</fullName>
    </alternativeName>
</protein>
<sequence length="468" mass="50470">MALWGGRFSGGPSEALAALSVSTQFDWRLARHDIAGSSAHAGVLHAAGLLDDDQYEGMMKALNALEEDVVSGRFVAQPEDEDVHTALERGLMERAGKDLGGRLRAGRSRNDQIIALLRRYLREEARSLAGELLGLAHVLSRQAEDVGDAVIAGRTHMQHAQPVLLAHQLLAHAWPLLRDVQRFRDLDARLDCSPYGSGALAGSSLGLDPEAVARDLGFSSSVPNSIDGTAARDVVAEFAFVAAQVGVDLSRLSEEIIIWNTREFGYVTLDDSFSTGSSIMPQKKNPDIAELARGKAGRLIGDLAGLMASLKGLPLAYARDLQEDKEPVFDQIDQLHLLLPAITGMVDTAVFNTDRMAEMAGQGFSLATDVAEWLVRQGVPFRVAHELSGACVRGAESQNKELADLTDQELIAIDPRLTPQVREVMTVQGSVRSRAGRGGTAPERVAEQITELREAIAGLRSFGEAETR</sequence>
<keyword id="KW-0028">Amino-acid biosynthesis</keyword>
<keyword id="KW-0055">Arginine biosynthesis</keyword>
<keyword id="KW-0963">Cytoplasm</keyword>
<keyword id="KW-0456">Lyase</keyword>
<proteinExistence type="inferred from homology"/>
<dbReference type="EC" id="4.3.2.1" evidence="1"/>
<dbReference type="EMBL" id="AE017283">
    <property type="protein sequence ID" value="AAT83099.1"/>
    <property type="status" value="ALT_INIT"/>
    <property type="molecule type" value="Genomic_DNA"/>
</dbReference>
<dbReference type="SMR" id="Q6A816"/>
<dbReference type="EnsemblBacteria" id="AAT83099">
    <property type="protein sequence ID" value="AAT83099"/>
    <property type="gene ID" value="PPA1346"/>
</dbReference>
<dbReference type="KEGG" id="pac:PPA1346"/>
<dbReference type="PATRIC" id="fig|267747.3.peg.1389"/>
<dbReference type="eggNOG" id="COG0165">
    <property type="taxonomic scope" value="Bacteria"/>
</dbReference>
<dbReference type="HOGENOM" id="CLU_027272_2_2_11"/>
<dbReference type="UniPathway" id="UPA00068">
    <property type="reaction ID" value="UER00114"/>
</dbReference>
<dbReference type="Proteomes" id="UP000000603">
    <property type="component" value="Chromosome"/>
</dbReference>
<dbReference type="GO" id="GO:0005829">
    <property type="term" value="C:cytosol"/>
    <property type="evidence" value="ECO:0007669"/>
    <property type="project" value="TreeGrafter"/>
</dbReference>
<dbReference type="GO" id="GO:0004056">
    <property type="term" value="F:argininosuccinate lyase activity"/>
    <property type="evidence" value="ECO:0007669"/>
    <property type="project" value="UniProtKB-UniRule"/>
</dbReference>
<dbReference type="GO" id="GO:0042450">
    <property type="term" value="P:arginine biosynthetic process via ornithine"/>
    <property type="evidence" value="ECO:0007669"/>
    <property type="project" value="InterPro"/>
</dbReference>
<dbReference type="GO" id="GO:0006526">
    <property type="term" value="P:L-arginine biosynthetic process"/>
    <property type="evidence" value="ECO:0007669"/>
    <property type="project" value="UniProtKB-UniRule"/>
</dbReference>
<dbReference type="CDD" id="cd01359">
    <property type="entry name" value="Argininosuccinate_lyase"/>
    <property type="match status" value="1"/>
</dbReference>
<dbReference type="FunFam" id="1.10.40.30:FF:000001">
    <property type="entry name" value="Argininosuccinate lyase"/>
    <property type="match status" value="1"/>
</dbReference>
<dbReference type="FunFam" id="1.20.200.10:FF:000015">
    <property type="entry name" value="argininosuccinate lyase isoform X2"/>
    <property type="match status" value="1"/>
</dbReference>
<dbReference type="Gene3D" id="1.10.40.30">
    <property type="entry name" value="Fumarase/aspartase (C-terminal domain)"/>
    <property type="match status" value="1"/>
</dbReference>
<dbReference type="Gene3D" id="1.20.200.10">
    <property type="entry name" value="Fumarase/aspartase (Central domain)"/>
    <property type="match status" value="1"/>
</dbReference>
<dbReference type="Gene3D" id="1.10.275.10">
    <property type="entry name" value="Fumarase/aspartase (N-terminal domain)"/>
    <property type="match status" value="1"/>
</dbReference>
<dbReference type="HAMAP" id="MF_00006">
    <property type="entry name" value="Arg_succ_lyase"/>
    <property type="match status" value="1"/>
</dbReference>
<dbReference type="InterPro" id="IPR029419">
    <property type="entry name" value="Arg_succ_lyase_C"/>
</dbReference>
<dbReference type="InterPro" id="IPR009049">
    <property type="entry name" value="Argininosuccinate_lyase"/>
</dbReference>
<dbReference type="InterPro" id="IPR024083">
    <property type="entry name" value="Fumarase/histidase_N"/>
</dbReference>
<dbReference type="InterPro" id="IPR020557">
    <property type="entry name" value="Fumarate_lyase_CS"/>
</dbReference>
<dbReference type="InterPro" id="IPR000362">
    <property type="entry name" value="Fumarate_lyase_fam"/>
</dbReference>
<dbReference type="InterPro" id="IPR022761">
    <property type="entry name" value="Fumarate_lyase_N"/>
</dbReference>
<dbReference type="InterPro" id="IPR008948">
    <property type="entry name" value="L-Aspartase-like"/>
</dbReference>
<dbReference type="NCBIfam" id="TIGR00838">
    <property type="entry name" value="argH"/>
    <property type="match status" value="1"/>
</dbReference>
<dbReference type="PANTHER" id="PTHR43814">
    <property type="entry name" value="ARGININOSUCCINATE LYASE"/>
    <property type="match status" value="1"/>
</dbReference>
<dbReference type="PANTHER" id="PTHR43814:SF1">
    <property type="entry name" value="ARGININOSUCCINATE LYASE"/>
    <property type="match status" value="1"/>
</dbReference>
<dbReference type="Pfam" id="PF14698">
    <property type="entry name" value="ASL_C2"/>
    <property type="match status" value="1"/>
</dbReference>
<dbReference type="Pfam" id="PF00206">
    <property type="entry name" value="Lyase_1"/>
    <property type="match status" value="1"/>
</dbReference>
<dbReference type="PRINTS" id="PR00145">
    <property type="entry name" value="ARGSUCLYASE"/>
</dbReference>
<dbReference type="PRINTS" id="PR00149">
    <property type="entry name" value="FUMRATELYASE"/>
</dbReference>
<dbReference type="SUPFAM" id="SSF48557">
    <property type="entry name" value="L-aspartase-like"/>
    <property type="match status" value="1"/>
</dbReference>
<dbReference type="PROSITE" id="PS00163">
    <property type="entry name" value="FUMARATE_LYASES"/>
    <property type="match status" value="1"/>
</dbReference>
<organism>
    <name type="scientific">Cutibacterium acnes (strain DSM 16379 / KPA171202)</name>
    <name type="common">Propionibacterium acnes</name>
    <dbReference type="NCBI Taxonomy" id="267747"/>
    <lineage>
        <taxon>Bacteria</taxon>
        <taxon>Bacillati</taxon>
        <taxon>Actinomycetota</taxon>
        <taxon>Actinomycetes</taxon>
        <taxon>Propionibacteriales</taxon>
        <taxon>Propionibacteriaceae</taxon>
        <taxon>Cutibacterium</taxon>
    </lineage>
</organism>
<name>ARLY_CUTAK</name>
<reference key="1">
    <citation type="journal article" date="2004" name="Science">
        <title>The complete genome sequence of Propionibacterium acnes, a commensal of human skin.</title>
        <authorList>
            <person name="Brueggemann H."/>
            <person name="Henne A."/>
            <person name="Hoster F."/>
            <person name="Liesegang H."/>
            <person name="Wiezer A."/>
            <person name="Strittmatter A."/>
            <person name="Hujer S."/>
            <person name="Duerre P."/>
            <person name="Gottschalk G."/>
        </authorList>
    </citation>
    <scope>NUCLEOTIDE SEQUENCE [LARGE SCALE GENOMIC DNA]</scope>
    <source>
        <strain>DSM 16379 / KPA171202</strain>
    </source>
</reference>
<feature type="chain" id="PRO_0000137802" description="Argininosuccinate lyase">
    <location>
        <begin position="1"/>
        <end position="468"/>
    </location>
</feature>
<gene>
    <name evidence="1" type="primary">argH</name>
    <name type="ordered locus">PPA1346</name>
</gene>
<accession>Q6A816</accession>
<comment type="catalytic activity">
    <reaction evidence="1">
        <text>2-(N(omega)-L-arginino)succinate = fumarate + L-arginine</text>
        <dbReference type="Rhea" id="RHEA:24020"/>
        <dbReference type="ChEBI" id="CHEBI:29806"/>
        <dbReference type="ChEBI" id="CHEBI:32682"/>
        <dbReference type="ChEBI" id="CHEBI:57472"/>
        <dbReference type="EC" id="4.3.2.1"/>
    </reaction>
</comment>
<comment type="pathway">
    <text evidence="1">Amino-acid biosynthesis; L-arginine biosynthesis; L-arginine from L-ornithine and carbamoyl phosphate: step 3/3.</text>
</comment>
<comment type="subcellular location">
    <subcellularLocation>
        <location evidence="1">Cytoplasm</location>
    </subcellularLocation>
</comment>
<comment type="similarity">
    <text evidence="1">Belongs to the lyase 1 family. Argininosuccinate lyase subfamily.</text>
</comment>
<comment type="sequence caution" evidence="2">
    <conflict type="erroneous initiation">
        <sequence resource="EMBL-CDS" id="AAT83099"/>
    </conflict>
</comment>
<evidence type="ECO:0000255" key="1">
    <source>
        <dbReference type="HAMAP-Rule" id="MF_00006"/>
    </source>
</evidence>
<evidence type="ECO:0000305" key="2"/>